<sequence>MRASQSPMLDPRARQLLRTLIARYIRDGEPVGSKTLAQHAGLDVSPATIRNILADLEDVGLLSSPHTSAGRVPTAHGYRVFVDSLVQMQPPGEEEVRRLRAELASGNGTQSLLGSASQMLSAMSHFVGVVSAPRREQFAFRHIDFVALDARRVLAILVFADNEVQNRVIEPRRAYEPAELERVANYLNAQFAGRALADIRACLLRELRMAKSEMEQLLAHSVELASEALVPADADDMVMAGQTRLMGVQDLSDLDRLRELFEAFASKREILQLLERTIQAPGVRIFIGEETGMVSLEDVSLVTAPYAANGQVLGVLGVIGPKRMAYDRLIPLVQTAADVLGAAMQSPGAR</sequence>
<reference key="1">
    <citation type="journal article" date="2002" name="Nature">
        <title>Comparison of the genomes of two Xanthomonas pathogens with differing host specificities.</title>
        <authorList>
            <person name="da Silva A.C.R."/>
            <person name="Ferro J.A."/>
            <person name="Reinach F.C."/>
            <person name="Farah C.S."/>
            <person name="Furlan L.R."/>
            <person name="Quaggio R.B."/>
            <person name="Monteiro-Vitorello C.B."/>
            <person name="Van Sluys M.A."/>
            <person name="Almeida N.F. Jr."/>
            <person name="Alves L.M.C."/>
            <person name="do Amaral A.M."/>
            <person name="Bertolini M.C."/>
            <person name="Camargo L.E.A."/>
            <person name="Camarotte G."/>
            <person name="Cannavan F."/>
            <person name="Cardozo J."/>
            <person name="Chambergo F."/>
            <person name="Ciapina L.P."/>
            <person name="Cicarelli R.M.B."/>
            <person name="Coutinho L.L."/>
            <person name="Cursino-Santos J.R."/>
            <person name="El-Dorry H."/>
            <person name="Faria J.B."/>
            <person name="Ferreira A.J.S."/>
            <person name="Ferreira R.C.C."/>
            <person name="Ferro M.I.T."/>
            <person name="Formighieri E.F."/>
            <person name="Franco M.C."/>
            <person name="Greggio C.C."/>
            <person name="Gruber A."/>
            <person name="Katsuyama A.M."/>
            <person name="Kishi L.T."/>
            <person name="Leite R.P."/>
            <person name="Lemos E.G.M."/>
            <person name="Lemos M.V.F."/>
            <person name="Locali E.C."/>
            <person name="Machado M.A."/>
            <person name="Madeira A.M.B.N."/>
            <person name="Martinez-Rossi N.M."/>
            <person name="Martins E.C."/>
            <person name="Meidanis J."/>
            <person name="Menck C.F.M."/>
            <person name="Miyaki C.Y."/>
            <person name="Moon D.H."/>
            <person name="Moreira L.M."/>
            <person name="Novo M.T.M."/>
            <person name="Okura V.K."/>
            <person name="Oliveira M.C."/>
            <person name="Oliveira V.R."/>
            <person name="Pereira H.A."/>
            <person name="Rossi A."/>
            <person name="Sena J.A.D."/>
            <person name="Silva C."/>
            <person name="de Souza R.F."/>
            <person name="Spinola L.A.F."/>
            <person name="Takita M.A."/>
            <person name="Tamura R.E."/>
            <person name="Teixeira E.C."/>
            <person name="Tezza R.I.D."/>
            <person name="Trindade dos Santos M."/>
            <person name="Truffi D."/>
            <person name="Tsai S.M."/>
            <person name="White F.F."/>
            <person name="Setubal J.C."/>
            <person name="Kitajima J.P."/>
        </authorList>
    </citation>
    <scope>NUCLEOTIDE SEQUENCE [LARGE SCALE GENOMIC DNA]</scope>
    <source>
        <strain>306</strain>
    </source>
</reference>
<gene>
    <name evidence="1" type="primary">hrcA</name>
    <name type="ordered locus">XAC1520</name>
</gene>
<comment type="function">
    <text evidence="1">Negative regulator of class I heat shock genes (grpE-dnaK-dnaJ and groELS operons). Prevents heat-shock induction of these operons.</text>
</comment>
<comment type="similarity">
    <text evidence="1">Belongs to the HrcA family.</text>
</comment>
<comment type="sequence caution" evidence="2">
    <conflict type="erroneous initiation">
        <sequence resource="EMBL-CDS" id="AAM36389"/>
    </conflict>
</comment>
<name>HRCA_XANAC</name>
<dbReference type="EMBL" id="AE008923">
    <property type="protein sequence ID" value="AAM36389.1"/>
    <property type="status" value="ALT_INIT"/>
    <property type="molecule type" value="Genomic_DNA"/>
</dbReference>
<dbReference type="SMR" id="Q8PMB2"/>
<dbReference type="KEGG" id="xac:XAC1520"/>
<dbReference type="eggNOG" id="COG1420">
    <property type="taxonomic scope" value="Bacteria"/>
</dbReference>
<dbReference type="HOGENOM" id="CLU_050019_0_0_6"/>
<dbReference type="Proteomes" id="UP000000576">
    <property type="component" value="Chromosome"/>
</dbReference>
<dbReference type="GO" id="GO:0003677">
    <property type="term" value="F:DNA binding"/>
    <property type="evidence" value="ECO:0007669"/>
    <property type="project" value="InterPro"/>
</dbReference>
<dbReference type="GO" id="GO:0045892">
    <property type="term" value="P:negative regulation of DNA-templated transcription"/>
    <property type="evidence" value="ECO:0007669"/>
    <property type="project" value="UniProtKB-UniRule"/>
</dbReference>
<dbReference type="FunFam" id="3.30.390.60:FF:000007">
    <property type="entry name" value="Heat-inducible transcription repressor HrcA"/>
    <property type="match status" value="1"/>
</dbReference>
<dbReference type="Gene3D" id="3.30.450.40">
    <property type="match status" value="1"/>
</dbReference>
<dbReference type="Gene3D" id="3.30.390.60">
    <property type="entry name" value="Heat-inducible transcription repressor hrca homolog, domain 3"/>
    <property type="match status" value="1"/>
</dbReference>
<dbReference type="Gene3D" id="1.10.10.10">
    <property type="entry name" value="Winged helix-like DNA-binding domain superfamily/Winged helix DNA-binding domain"/>
    <property type="match status" value="1"/>
</dbReference>
<dbReference type="HAMAP" id="MF_00081">
    <property type="entry name" value="HrcA"/>
    <property type="match status" value="1"/>
</dbReference>
<dbReference type="InterPro" id="IPR029016">
    <property type="entry name" value="GAF-like_dom_sf"/>
</dbReference>
<dbReference type="InterPro" id="IPR002571">
    <property type="entry name" value="HrcA"/>
</dbReference>
<dbReference type="InterPro" id="IPR021153">
    <property type="entry name" value="HrcA_C"/>
</dbReference>
<dbReference type="InterPro" id="IPR036388">
    <property type="entry name" value="WH-like_DNA-bd_sf"/>
</dbReference>
<dbReference type="InterPro" id="IPR036390">
    <property type="entry name" value="WH_DNA-bd_sf"/>
</dbReference>
<dbReference type="InterPro" id="IPR005104">
    <property type="entry name" value="WHTH_HrcA_DNA-bd"/>
</dbReference>
<dbReference type="InterPro" id="IPR023120">
    <property type="entry name" value="WHTH_transcript_rep_HrcA_IDD"/>
</dbReference>
<dbReference type="NCBIfam" id="TIGR00331">
    <property type="entry name" value="hrcA"/>
    <property type="match status" value="1"/>
</dbReference>
<dbReference type="PANTHER" id="PTHR34824">
    <property type="entry name" value="HEAT-INDUCIBLE TRANSCRIPTION REPRESSOR HRCA"/>
    <property type="match status" value="1"/>
</dbReference>
<dbReference type="PANTHER" id="PTHR34824:SF1">
    <property type="entry name" value="HEAT-INDUCIBLE TRANSCRIPTION REPRESSOR HRCA"/>
    <property type="match status" value="1"/>
</dbReference>
<dbReference type="Pfam" id="PF01628">
    <property type="entry name" value="HrcA"/>
    <property type="match status" value="1"/>
</dbReference>
<dbReference type="Pfam" id="PF03444">
    <property type="entry name" value="HrcA_DNA-bdg"/>
    <property type="match status" value="1"/>
</dbReference>
<dbReference type="PIRSF" id="PIRSF005485">
    <property type="entry name" value="HrcA"/>
    <property type="match status" value="1"/>
</dbReference>
<dbReference type="SUPFAM" id="SSF55781">
    <property type="entry name" value="GAF domain-like"/>
    <property type="match status" value="1"/>
</dbReference>
<dbReference type="SUPFAM" id="SSF46785">
    <property type="entry name" value="Winged helix' DNA-binding domain"/>
    <property type="match status" value="1"/>
</dbReference>
<protein>
    <recommendedName>
        <fullName evidence="1">Heat-inducible transcription repressor HrcA</fullName>
    </recommendedName>
</protein>
<evidence type="ECO:0000255" key="1">
    <source>
        <dbReference type="HAMAP-Rule" id="MF_00081"/>
    </source>
</evidence>
<evidence type="ECO:0000305" key="2"/>
<organism>
    <name type="scientific">Xanthomonas axonopodis pv. citri (strain 306)</name>
    <dbReference type="NCBI Taxonomy" id="190486"/>
    <lineage>
        <taxon>Bacteria</taxon>
        <taxon>Pseudomonadati</taxon>
        <taxon>Pseudomonadota</taxon>
        <taxon>Gammaproteobacteria</taxon>
        <taxon>Lysobacterales</taxon>
        <taxon>Lysobacteraceae</taxon>
        <taxon>Xanthomonas</taxon>
    </lineage>
</organism>
<proteinExistence type="inferred from homology"/>
<keyword id="KW-0678">Repressor</keyword>
<keyword id="KW-0346">Stress response</keyword>
<keyword id="KW-0804">Transcription</keyword>
<keyword id="KW-0805">Transcription regulation</keyword>
<feature type="chain" id="PRO_0000182555" description="Heat-inducible transcription repressor HrcA">
    <location>
        <begin position="1"/>
        <end position="350"/>
    </location>
</feature>
<accession>Q8PMB2</accession>